<feature type="chain" id="PRO_0000154169" description="ABA-responsive protein ABR18">
    <location>
        <begin position="1"/>
        <end position="158"/>
    </location>
</feature>
<reference key="1">
    <citation type="journal article" date="1994" name="Plant Mol. Biol.">
        <title>Two ABA-responsive proteins from pea (Pisum sativum L.) are closely related to intracellular pathogenesis-related proteins.</title>
        <authorList>
            <person name="Iturriaga E.A."/>
            <person name="Leech M.J."/>
            <person name="Barratt D.H."/>
            <person name="Wang T.L."/>
        </authorList>
    </citation>
    <scope>NUCLEOTIDE SEQUENCE [MRNA]</scope>
    <source>
        <tissue>Cotyledon</tissue>
    </source>
</reference>
<evidence type="ECO:0000305" key="1"/>
<keyword id="KW-0568">Pathogenesis-related protein</keyword>
<keyword id="KW-0611">Plant defense</keyword>
<organism>
    <name type="scientific">Pisum sativum</name>
    <name type="common">Garden pea</name>
    <name type="synonym">Lathyrus oleraceus</name>
    <dbReference type="NCBI Taxonomy" id="3888"/>
    <lineage>
        <taxon>Eukaryota</taxon>
        <taxon>Viridiplantae</taxon>
        <taxon>Streptophyta</taxon>
        <taxon>Embryophyta</taxon>
        <taxon>Tracheophyta</taxon>
        <taxon>Spermatophyta</taxon>
        <taxon>Magnoliopsida</taxon>
        <taxon>eudicotyledons</taxon>
        <taxon>Gunneridae</taxon>
        <taxon>Pentapetalae</taxon>
        <taxon>rosids</taxon>
        <taxon>fabids</taxon>
        <taxon>Fabales</taxon>
        <taxon>Fabaceae</taxon>
        <taxon>Papilionoideae</taxon>
        <taxon>50 kb inversion clade</taxon>
        <taxon>NPAAA clade</taxon>
        <taxon>Hologalegina</taxon>
        <taxon>IRL clade</taxon>
        <taxon>Fabeae</taxon>
        <taxon>Pisum</taxon>
    </lineage>
</organism>
<name>ABR18_PEA</name>
<proteinExistence type="evidence at transcript level"/>
<protein>
    <recommendedName>
        <fullName>ABA-responsive protein ABR18</fullName>
    </recommendedName>
</protein>
<dbReference type="EMBL" id="Z15127">
    <property type="protein sequence ID" value="CAA78828.1"/>
    <property type="molecule type" value="mRNA"/>
</dbReference>
<dbReference type="PIR" id="S42650">
    <property type="entry name" value="S42650"/>
</dbReference>
<dbReference type="RefSeq" id="NP_001413752.1">
    <property type="nucleotide sequence ID" value="NM_001426823.1"/>
</dbReference>
<dbReference type="SMR" id="Q06930"/>
<dbReference type="GeneID" id="127073249"/>
<dbReference type="OrthoDB" id="1858506at2759"/>
<dbReference type="GO" id="GO:0005737">
    <property type="term" value="C:cytoplasm"/>
    <property type="evidence" value="ECO:0007669"/>
    <property type="project" value="TreeGrafter"/>
</dbReference>
<dbReference type="GO" id="GO:0005634">
    <property type="term" value="C:nucleus"/>
    <property type="evidence" value="ECO:0007669"/>
    <property type="project" value="TreeGrafter"/>
</dbReference>
<dbReference type="GO" id="GO:0010427">
    <property type="term" value="F:abscisic acid binding"/>
    <property type="evidence" value="ECO:0007669"/>
    <property type="project" value="InterPro"/>
</dbReference>
<dbReference type="GO" id="GO:0004864">
    <property type="term" value="F:protein phosphatase inhibitor activity"/>
    <property type="evidence" value="ECO:0007669"/>
    <property type="project" value="InterPro"/>
</dbReference>
<dbReference type="GO" id="GO:0038023">
    <property type="term" value="F:signaling receptor activity"/>
    <property type="evidence" value="ECO:0007669"/>
    <property type="project" value="InterPro"/>
</dbReference>
<dbReference type="GO" id="GO:0009738">
    <property type="term" value="P:abscisic acid-activated signaling pathway"/>
    <property type="evidence" value="ECO:0007669"/>
    <property type="project" value="InterPro"/>
</dbReference>
<dbReference type="GO" id="GO:0006952">
    <property type="term" value="P:defense response"/>
    <property type="evidence" value="ECO:0007669"/>
    <property type="project" value="UniProtKB-KW"/>
</dbReference>
<dbReference type="CDD" id="cd07816">
    <property type="entry name" value="Bet_v1-like"/>
    <property type="match status" value="1"/>
</dbReference>
<dbReference type="FunFam" id="3.30.530.20:FF:000007">
    <property type="entry name" value="Major pollen allergen Bet v 1-A"/>
    <property type="match status" value="1"/>
</dbReference>
<dbReference type="Gene3D" id="3.30.530.20">
    <property type="match status" value="1"/>
</dbReference>
<dbReference type="InterPro" id="IPR000916">
    <property type="entry name" value="Bet_v_I/MLP"/>
</dbReference>
<dbReference type="InterPro" id="IPR024949">
    <property type="entry name" value="Bet_v_I_allergen"/>
</dbReference>
<dbReference type="InterPro" id="IPR050279">
    <property type="entry name" value="Plant_def-hormone_signal"/>
</dbReference>
<dbReference type="InterPro" id="IPR023393">
    <property type="entry name" value="START-like_dom_sf"/>
</dbReference>
<dbReference type="PANTHER" id="PTHR31213">
    <property type="entry name" value="OS08G0374000 PROTEIN-RELATED"/>
    <property type="match status" value="1"/>
</dbReference>
<dbReference type="PANTHER" id="PTHR31213:SF55">
    <property type="entry name" value="STRESS-INDUCED PROTEIN SAM22"/>
    <property type="match status" value="1"/>
</dbReference>
<dbReference type="Pfam" id="PF00407">
    <property type="entry name" value="Bet_v_1"/>
    <property type="match status" value="1"/>
</dbReference>
<dbReference type="PRINTS" id="PR00634">
    <property type="entry name" value="BETALLERGEN"/>
</dbReference>
<dbReference type="SUPFAM" id="SSF55961">
    <property type="entry name" value="Bet v1-like"/>
    <property type="match status" value="1"/>
</dbReference>
<dbReference type="PROSITE" id="PS00451">
    <property type="entry name" value="PATHOGENESIS_BETVI"/>
    <property type="match status" value="1"/>
</dbReference>
<accession>Q06930</accession>
<sequence length="158" mass="17023">MGVFTYENDTTSTVPPAKLFKAVVHDADLIVPKVVDSIKTVEILEGNGGPGTVKKLTFVEGGQTLYVLHKVEAIDDAKFEYNYSIVGGVGISDIVEKISFEAKLFEGPNGGSVGKMIVKYHTKGDAKPIEKEVEEGKAKGDALFKAIEAYVLANPNYN</sequence>
<comment type="similarity">
    <text evidence="1">Belongs to the BetVI family.</text>
</comment>